<organism>
    <name type="scientific">Naja kaouthia</name>
    <name type="common">Monocled cobra</name>
    <name type="synonym">Naja siamensis</name>
    <dbReference type="NCBI Taxonomy" id="8649"/>
    <lineage>
        <taxon>Eukaryota</taxon>
        <taxon>Metazoa</taxon>
        <taxon>Chordata</taxon>
        <taxon>Craniata</taxon>
        <taxon>Vertebrata</taxon>
        <taxon>Euteleostomi</taxon>
        <taxon>Lepidosauria</taxon>
        <taxon>Squamata</taxon>
        <taxon>Bifurcata</taxon>
        <taxon>Unidentata</taxon>
        <taxon>Episquamata</taxon>
        <taxon>Toxicofera</taxon>
        <taxon>Serpentes</taxon>
        <taxon>Colubroidea</taxon>
        <taxon>Elapidae</taxon>
        <taxon>Elapinae</taxon>
        <taxon>Naja</taxon>
    </lineage>
</organism>
<dbReference type="PIR" id="JC2394">
    <property type="entry name" value="JC2394"/>
</dbReference>
<dbReference type="GO" id="GO:0005576">
    <property type="term" value="C:extracellular region"/>
    <property type="evidence" value="ECO:0007669"/>
    <property type="project" value="UniProtKB-SubCell"/>
</dbReference>
<dbReference type="GO" id="GO:0019834">
    <property type="term" value="F:phospholipase A2 inhibitor activity"/>
    <property type="evidence" value="ECO:0007669"/>
    <property type="project" value="UniProtKB-KW"/>
</dbReference>
<dbReference type="CDD" id="cd23572">
    <property type="entry name" value="TFP_LU_ECD_PINLYP_rpt2"/>
    <property type="match status" value="1"/>
</dbReference>
<dbReference type="CDD" id="cd23630">
    <property type="entry name" value="TFP_LU_ECD_PLIGB"/>
    <property type="match status" value="1"/>
</dbReference>
<dbReference type="Gene3D" id="2.10.60.10">
    <property type="entry name" value="CD59"/>
    <property type="match status" value="2"/>
</dbReference>
<dbReference type="InterPro" id="IPR050918">
    <property type="entry name" value="CNF-like_PLA2_Inhibitor"/>
</dbReference>
<dbReference type="InterPro" id="IPR016054">
    <property type="entry name" value="LY6_UPA_recep-like"/>
</dbReference>
<dbReference type="InterPro" id="IPR016338">
    <property type="entry name" value="PLipase_A2-inh_b-type"/>
</dbReference>
<dbReference type="InterPro" id="IPR004126">
    <property type="entry name" value="PLipase_A2_inh_N"/>
</dbReference>
<dbReference type="InterPro" id="IPR045860">
    <property type="entry name" value="Snake_toxin-like_sf"/>
</dbReference>
<dbReference type="PANTHER" id="PTHR20914">
    <property type="entry name" value="LY6/PLAUR DOMAIN-CONTAINING PROTEIN 8"/>
    <property type="match status" value="1"/>
</dbReference>
<dbReference type="PANTHER" id="PTHR20914:SF30">
    <property type="entry name" value="LY6_PLAUR DOMAIN CONTAINING 9"/>
    <property type="match status" value="1"/>
</dbReference>
<dbReference type="Pfam" id="PF02988">
    <property type="entry name" value="PLA2_inh"/>
    <property type="match status" value="1"/>
</dbReference>
<dbReference type="Pfam" id="PF00021">
    <property type="entry name" value="UPAR_LY6"/>
    <property type="match status" value="1"/>
</dbReference>
<dbReference type="PIRSF" id="PIRSF002023">
    <property type="entry name" value="PLA2_inhib_alpha/gamma"/>
    <property type="match status" value="1"/>
</dbReference>
<dbReference type="SUPFAM" id="SSF57302">
    <property type="entry name" value="Snake toxin-like"/>
    <property type="match status" value="2"/>
</dbReference>
<protein>
    <recommendedName>
        <fullName evidence="2">Phospholipase A2 inhibitor 25 kDa subunit</fullName>
    </recommendedName>
    <alternativeName>
        <fullName evidence="2">gamma-PLI</fullName>
    </alternativeName>
</protein>
<accession>Q7LZI2</accession>
<reference key="1">
    <citation type="journal article" date="1994" name="Biochem. Biophys. Res. Commun.">
        <title>The two subunits of a phospholipase A2 inhibitor from the plasma of thailand cobra having structural similarity to urokinase-type plasminogen activator receptor and Ly-6 related proteins.</title>
        <authorList>
            <person name="Ohkura N."/>
            <person name="Inoue S."/>
            <person name="Ikeda K."/>
            <person name="Hayashi K."/>
        </authorList>
    </citation>
    <scope>PROTEIN SEQUENCE</scope>
    <scope>DISULFIDE BONDS</scope>
    <scope>SUBCELLULAR LOCATION</scope>
    <scope>SUBUNIT</scope>
    <source>
        <tissue>Plasma</tissue>
    </source>
</reference>
<sequence>MECEACIGMGKDCNSWMKTCAAHEDTCVTFQTEVIAAPVSLTVIFKACGVSDTCHLDYMETTLHDKVKVRIKRSCCTGEDCPLPPFPGLGFQVNRPNRLHCPACIGLFSKECTEHLVSCRASENQCLTVTGKEFGLFFRALSYKGCATESLCALLKKRFWDGLEDIEVDFKCTPALPPPSLASDV</sequence>
<proteinExistence type="evidence at protein level"/>
<keyword id="KW-0903">Direct protein sequencing</keyword>
<keyword id="KW-1015">Disulfide bond</keyword>
<keyword id="KW-0593">Phospholipase A2 inhibitor</keyword>
<keyword id="KW-0964">Secreted</keyword>
<name>PLIGA_NAJKA</name>
<feature type="chain" id="PRO_0000215267" description="Phospholipase A2 inhibitor 25 kDa subunit" evidence="1">
    <location>
        <begin position="1"/>
        <end position="185"/>
    </location>
</feature>
<feature type="disulfide bond" evidence="1">
    <location>
        <begin position="3"/>
        <end position="27"/>
    </location>
</feature>
<feature type="disulfide bond" evidence="1">
    <location>
        <begin position="6"/>
        <end position="13"/>
    </location>
</feature>
<feature type="disulfide bond" evidence="1">
    <location>
        <begin position="20"/>
        <end position="48"/>
    </location>
</feature>
<feature type="disulfide bond" evidence="1">
    <location>
        <begin position="54"/>
        <end position="75"/>
    </location>
</feature>
<feature type="disulfide bond" evidence="1">
    <location>
        <begin position="76"/>
        <end position="81"/>
    </location>
</feature>
<feature type="disulfide bond" evidence="1">
    <location>
        <begin position="101"/>
        <end position="126"/>
    </location>
</feature>
<feature type="disulfide bond" evidence="1">
    <location>
        <begin position="119"/>
        <end position="146"/>
    </location>
</feature>
<feature type="disulfide bond" evidence="1">
    <location>
        <begin position="152"/>
        <end position="172"/>
    </location>
</feature>
<comment type="function">
    <text>Inhibits the enzymatic activity of phospholipase A2.</text>
</comment>
<comment type="subunit">
    <text evidence="1">Heterodimer with phospholipase A2 inhibitor 31 kDa.</text>
</comment>
<comment type="subcellular location">
    <subcellularLocation>
        <location evidence="1">Secreted</location>
    </subcellularLocation>
    <text evidence="1">Secreted in blood plasma.</text>
</comment>
<comment type="tissue specificity">
    <text evidence="3">Expressed by the liver.</text>
</comment>
<comment type="similarity">
    <text evidence="3">Belongs to the CNF-like-inhibitor family.</text>
</comment>
<evidence type="ECO:0000269" key="1">
    <source>
    </source>
</evidence>
<evidence type="ECO:0000303" key="2">
    <source>
    </source>
</evidence>
<evidence type="ECO:0000305" key="3"/>